<protein>
    <recommendedName>
        <fullName>Leukocyte elastase inhibitor</fullName>
        <shortName>LEI</shortName>
    </recommendedName>
    <alternativeName>
        <fullName>Serpin B1</fullName>
    </alternativeName>
</protein>
<name>ILEU_HORSE</name>
<organism>
    <name type="scientific">Equus caballus</name>
    <name type="common">Horse</name>
    <dbReference type="NCBI Taxonomy" id="9796"/>
    <lineage>
        <taxon>Eukaryota</taxon>
        <taxon>Metazoa</taxon>
        <taxon>Chordata</taxon>
        <taxon>Craniata</taxon>
        <taxon>Vertebrata</taxon>
        <taxon>Euteleostomi</taxon>
        <taxon>Mammalia</taxon>
        <taxon>Eutheria</taxon>
        <taxon>Laurasiatheria</taxon>
        <taxon>Perissodactyla</taxon>
        <taxon>Equidae</taxon>
        <taxon>Equus</taxon>
    </lineage>
</organism>
<comment type="function">
    <text evidence="1">Neutrophil serine protease inhibitor that plays an essential role in the regulation of the innate immune response, inflammation and cellular homeostasis. Acts primarily to protect the cell from proteases released in the cytoplasm during stress or infection. These proteases are important in killing microbes but when released from granules, these potent enzymes also destroy host proteins and contribute to mortality. Regulates the activity of the neutrophil proteases elastase, cathepsin G, proteinase-3, chymase, chymotrypsin, and kallikrein-3. Also acts as a potent intracellular inhibitor of GZMH by directly blocking its proteolytic activity. During inflammation, limits the activity of inflammatory caspases CASP1, CASP4 and CASP5 by suppressing their caspase-recruitment domain (CARD) oligomerization and enzymatic activation. When secreted, promotes the proliferation of beta-cells via its protease inhibitory function.</text>
</comment>
<comment type="subunit">
    <text evidence="1 2">Monomer. Interacts (via C-terminus) with CASP1; CASP4 (via CARD domain) and CASP5; these interactions regulate the activity of inflammatory caspases. Interacts with PRTN3. Interacts with GZMH (By similarity). Interacts with TMSB4 (PubMed:1551869).</text>
</comment>
<comment type="subcellular location">
    <subcellularLocation>
        <location evidence="1">Secreted</location>
    </subcellularLocation>
    <subcellularLocation>
        <location evidence="1">Cytoplasm</location>
    </subcellularLocation>
    <subcellularLocation>
        <location evidence="1">Cytolytic granule</location>
    </subcellularLocation>
    <subcellularLocation>
        <location evidence="1">Early endosome</location>
    </subcellularLocation>
</comment>
<comment type="PTM">
    <text>The N-terminus is blocked.</text>
</comment>
<comment type="similarity">
    <text evidence="3">Belongs to the serpin family. Ov-serpin subfamily.</text>
</comment>
<accession>P05619</accession>
<feature type="chain" id="PRO_0000094100" description="Leukocyte elastase inhibitor">
    <location>
        <begin position="1"/>
        <end position="379"/>
    </location>
</feature>
<feature type="region of interest" description="CARD-binding motif (CBM)" evidence="1">
    <location>
        <begin position="351"/>
        <end position="379"/>
    </location>
</feature>
<feature type="site" description="Reactive bond">
    <location>
        <begin position="344"/>
        <end position="345"/>
    </location>
</feature>
<feature type="modified residue" description="N-acetylmethionine" evidence="1">
    <location>
        <position position="1"/>
    </location>
</feature>
<feature type="modified residue" description="N6-acetyllysine" evidence="1">
    <location>
        <position position="137"/>
    </location>
</feature>
<feature type="modified residue" description="N6-acetyllysine" evidence="1">
    <location>
        <position position="177"/>
    </location>
</feature>
<feature type="helix" evidence="4">
    <location>
        <begin position="2"/>
        <end position="22"/>
    </location>
</feature>
<feature type="strand" evidence="4">
    <location>
        <begin position="24"/>
        <end position="26"/>
    </location>
</feature>
<feature type="strand" evidence="4">
    <location>
        <begin position="28"/>
        <end position="30"/>
    </location>
</feature>
<feature type="helix" evidence="4">
    <location>
        <begin position="32"/>
        <end position="44"/>
    </location>
</feature>
<feature type="helix" evidence="4">
    <location>
        <begin position="48"/>
        <end position="57"/>
    </location>
</feature>
<feature type="helix" evidence="4">
    <location>
        <begin position="60"/>
        <end position="62"/>
    </location>
</feature>
<feature type="helix" evidence="4">
    <location>
        <begin position="66"/>
        <end position="77"/>
    </location>
</feature>
<feature type="strand" evidence="4">
    <location>
        <begin position="83"/>
        <end position="95"/>
    </location>
</feature>
<feature type="helix" evidence="4">
    <location>
        <begin position="102"/>
        <end position="112"/>
    </location>
</feature>
<feature type="strand" evidence="4">
    <location>
        <begin position="115"/>
        <end position="119"/>
    </location>
</feature>
<feature type="turn" evidence="4">
    <location>
        <begin position="121"/>
        <end position="123"/>
    </location>
</feature>
<feature type="helix" evidence="4">
    <location>
        <begin position="125"/>
        <end position="139"/>
    </location>
</feature>
<feature type="turn" evidence="4">
    <location>
        <begin position="140"/>
        <end position="142"/>
    </location>
</feature>
<feature type="strand" evidence="4">
    <location>
        <begin position="143"/>
        <end position="145"/>
    </location>
</feature>
<feature type="strand" evidence="4">
    <location>
        <begin position="157"/>
        <end position="173"/>
    </location>
</feature>
<feature type="helix" evidence="4">
    <location>
        <begin position="177"/>
        <end position="179"/>
    </location>
</feature>
<feature type="strand" evidence="4">
    <location>
        <begin position="181"/>
        <end position="190"/>
    </location>
</feature>
<feature type="strand" evidence="4">
    <location>
        <begin position="192"/>
        <end position="209"/>
    </location>
</feature>
<feature type="helix" evidence="4">
    <location>
        <begin position="210"/>
        <end position="212"/>
    </location>
</feature>
<feature type="strand" evidence="4">
    <location>
        <begin position="214"/>
        <end position="221"/>
    </location>
</feature>
<feature type="strand" evidence="4">
    <location>
        <begin position="224"/>
        <end position="235"/>
    </location>
</feature>
<feature type="strand" evidence="4">
    <location>
        <begin position="238"/>
        <end position="242"/>
    </location>
</feature>
<feature type="helix" evidence="4">
    <location>
        <begin position="244"/>
        <end position="248"/>
    </location>
</feature>
<feature type="helix" evidence="4">
    <location>
        <begin position="252"/>
        <end position="259"/>
    </location>
</feature>
<feature type="helix" evidence="4">
    <location>
        <begin position="261"/>
        <end position="263"/>
    </location>
</feature>
<feature type="strand" evidence="4">
    <location>
        <begin position="265"/>
        <end position="274"/>
    </location>
</feature>
<feature type="strand" evidence="4">
    <location>
        <begin position="276"/>
        <end position="283"/>
    </location>
</feature>
<feature type="helix" evidence="4">
    <location>
        <begin position="285"/>
        <end position="291"/>
    </location>
</feature>
<feature type="helix" evidence="4">
    <location>
        <begin position="295"/>
        <end position="297"/>
    </location>
</feature>
<feature type="turn" evidence="4">
    <location>
        <begin position="299"/>
        <end position="301"/>
    </location>
</feature>
<feature type="helix" evidence="4">
    <location>
        <begin position="305"/>
        <end position="308"/>
    </location>
</feature>
<feature type="strand" evidence="4">
    <location>
        <begin position="309"/>
        <end position="311"/>
    </location>
</feature>
<feature type="strand" evidence="4">
    <location>
        <begin position="313"/>
        <end position="326"/>
    </location>
</feature>
<feature type="strand" evidence="4">
    <location>
        <begin position="328"/>
        <end position="343"/>
    </location>
</feature>
<feature type="strand" evidence="4">
    <location>
        <begin position="350"/>
        <end position="353"/>
    </location>
</feature>
<feature type="strand" evidence="4">
    <location>
        <begin position="358"/>
        <end position="364"/>
    </location>
</feature>
<feature type="turn" evidence="4">
    <location>
        <begin position="365"/>
        <end position="368"/>
    </location>
</feature>
<feature type="strand" evidence="4">
    <location>
        <begin position="369"/>
        <end position="376"/>
    </location>
</feature>
<reference key="1">
    <citation type="journal article" date="1992" name="J. Biol. Chem.">
        <title>Equine leukocyte elastase inhibitor. Primary structure and identification as a thymosin-binding protein.</title>
        <authorList>
            <person name="Dubin A."/>
            <person name="Travis J."/>
            <person name="Enghild J.J."/>
            <person name="Potempa J."/>
        </authorList>
    </citation>
    <scope>PROTEIN SEQUENCE</scope>
    <scope>SUBCELLULAR LOCATION</scope>
    <scope>INTERACTION WITH TMSB4</scope>
    <source>
        <tissue>Leukocyte</tissue>
    </source>
</reference>
<reference key="2">
    <citation type="journal article" date="1993" name="Biochem. J.">
        <title>Molecular cloning and expression of an intracellular serpin: an elastase inhibitor from horse leucocytes.</title>
        <authorList>
            <person name="Kordula T."/>
            <person name="Dubin A."/>
            <person name="Schooltink H."/>
            <person name="Koj A."/>
            <person name="Heinrich P.C."/>
            <person name="Rose-John S."/>
        </authorList>
    </citation>
    <scope>NUCLEOTIDE SEQUENCE [MRNA]</scope>
</reference>
<reference key="3">
    <citation type="journal article" date="1988" name="J. Biol. Chem.">
        <title>An elastase inhibitor from equine leukocyte cytosol belongs to the serpin superfamily. Further characterization and amino acid sequence of the reactive center.</title>
        <authorList>
            <person name="Potempa J."/>
            <person name="Dubin A."/>
            <person name="Watorek W."/>
            <person name="Travis J."/>
        </authorList>
    </citation>
    <scope>PROTEIN SEQUENCE OF 343-362</scope>
</reference>
<reference key="4">
    <citation type="journal article" date="1992" name="J. Mol. Biol.">
        <title>Crystal structure of cleaved equine leucocyte elastase inhibitor determined at 1.95-A resolution.</title>
        <authorList>
            <person name="Baumann U."/>
            <person name="Bode W."/>
            <person name="Huber R."/>
            <person name="Travis J."/>
            <person name="Potempa J."/>
        </authorList>
    </citation>
    <scope>X-RAY CRYSTALLOGRAPHY (1.95 ANGSTROMS)</scope>
</reference>
<dbReference type="EMBL" id="M91161">
    <property type="protein sequence ID" value="AAA97513.1"/>
    <property type="molecule type" value="mRNA"/>
</dbReference>
<dbReference type="PIR" id="A28060">
    <property type="entry name" value="A28060"/>
</dbReference>
<dbReference type="PIR" id="A42421">
    <property type="entry name" value="A42421"/>
</dbReference>
<dbReference type="RefSeq" id="NP_001075416.1">
    <property type="nucleotide sequence ID" value="NM_001081947.2"/>
</dbReference>
<dbReference type="RefSeq" id="XP_005603556.1">
    <property type="nucleotide sequence ID" value="XM_005603499.2"/>
</dbReference>
<dbReference type="RefSeq" id="XP_005603557.1">
    <property type="nucleotide sequence ID" value="XM_005603500.2"/>
</dbReference>
<dbReference type="PDB" id="1HLE">
    <property type="method" value="X-ray"/>
    <property type="resolution" value="1.95 A"/>
    <property type="chains" value="A=1-344, B=349-379"/>
</dbReference>
<dbReference type="PDBsum" id="1HLE"/>
<dbReference type="SMR" id="P05619"/>
<dbReference type="FunCoup" id="P05619">
    <property type="interactions" value="642"/>
</dbReference>
<dbReference type="STRING" id="9796.ENSECAP00000043372"/>
<dbReference type="MEROPS" id="I04.006"/>
<dbReference type="PaxDb" id="9796-ENSECAP00000043372"/>
<dbReference type="PeptideAtlas" id="P05619"/>
<dbReference type="GeneID" id="100049797"/>
<dbReference type="KEGG" id="ecb:100049797"/>
<dbReference type="CTD" id="1992"/>
<dbReference type="HOGENOM" id="CLU_023330_0_2_1"/>
<dbReference type="InParanoid" id="P05619"/>
<dbReference type="OrthoDB" id="671595at2759"/>
<dbReference type="TreeFam" id="TF352619"/>
<dbReference type="EvolutionaryTrace" id="P05619"/>
<dbReference type="Proteomes" id="UP000002281">
    <property type="component" value="Unplaced"/>
</dbReference>
<dbReference type="GO" id="GO:0044194">
    <property type="term" value="C:cytolytic granule"/>
    <property type="evidence" value="ECO:0007669"/>
    <property type="project" value="UniProtKB-SubCell"/>
</dbReference>
<dbReference type="GO" id="GO:0005769">
    <property type="term" value="C:early endosome"/>
    <property type="evidence" value="ECO:0007669"/>
    <property type="project" value="UniProtKB-SubCell"/>
</dbReference>
<dbReference type="GO" id="GO:0005615">
    <property type="term" value="C:extracellular space"/>
    <property type="evidence" value="ECO:0000318"/>
    <property type="project" value="GO_Central"/>
</dbReference>
<dbReference type="GO" id="GO:0004867">
    <property type="term" value="F:serine-type endopeptidase inhibitor activity"/>
    <property type="evidence" value="ECO:0000318"/>
    <property type="project" value="GO_Central"/>
</dbReference>
<dbReference type="GO" id="GO:0032691">
    <property type="term" value="P:negative regulation of interleukin-1 beta production"/>
    <property type="evidence" value="ECO:0000318"/>
    <property type="project" value="GO_Central"/>
</dbReference>
<dbReference type="CDD" id="cd19560">
    <property type="entry name" value="serpinB1_LEI"/>
    <property type="match status" value="1"/>
</dbReference>
<dbReference type="FunFam" id="3.30.497.10:FF:000004">
    <property type="entry name" value="Serpin family B member 1"/>
    <property type="match status" value="1"/>
</dbReference>
<dbReference type="FunFam" id="2.30.39.10:FF:000014">
    <property type="entry name" value="Serpin family B member 9"/>
    <property type="match status" value="1"/>
</dbReference>
<dbReference type="Gene3D" id="2.30.39.10">
    <property type="entry name" value="Alpha-1-antitrypsin, domain 1"/>
    <property type="match status" value="1"/>
</dbReference>
<dbReference type="Gene3D" id="3.30.497.10">
    <property type="entry name" value="Antithrombin, subunit I, domain 2"/>
    <property type="match status" value="1"/>
</dbReference>
<dbReference type="InterPro" id="IPR023795">
    <property type="entry name" value="Serpin_CS"/>
</dbReference>
<dbReference type="InterPro" id="IPR023796">
    <property type="entry name" value="Serpin_dom"/>
</dbReference>
<dbReference type="InterPro" id="IPR000215">
    <property type="entry name" value="Serpin_fam"/>
</dbReference>
<dbReference type="InterPro" id="IPR036186">
    <property type="entry name" value="Serpin_sf"/>
</dbReference>
<dbReference type="InterPro" id="IPR042178">
    <property type="entry name" value="Serpin_sf_1"/>
</dbReference>
<dbReference type="InterPro" id="IPR042185">
    <property type="entry name" value="Serpin_sf_2"/>
</dbReference>
<dbReference type="PANTHER" id="PTHR11461:SF180">
    <property type="entry name" value="LEUKOCYTE ELASTASE INHIBITOR"/>
    <property type="match status" value="1"/>
</dbReference>
<dbReference type="PANTHER" id="PTHR11461">
    <property type="entry name" value="SERINE PROTEASE INHIBITOR, SERPIN"/>
    <property type="match status" value="1"/>
</dbReference>
<dbReference type="Pfam" id="PF00079">
    <property type="entry name" value="Serpin"/>
    <property type="match status" value="1"/>
</dbReference>
<dbReference type="SMART" id="SM00093">
    <property type="entry name" value="SERPIN"/>
    <property type="match status" value="1"/>
</dbReference>
<dbReference type="SUPFAM" id="SSF56574">
    <property type="entry name" value="Serpins"/>
    <property type="match status" value="1"/>
</dbReference>
<dbReference type="PROSITE" id="PS00284">
    <property type="entry name" value="SERPIN"/>
    <property type="match status" value="1"/>
</dbReference>
<keyword id="KW-0002">3D-structure</keyword>
<keyword id="KW-0007">Acetylation</keyword>
<keyword id="KW-0963">Cytoplasm</keyword>
<keyword id="KW-0903">Direct protein sequencing</keyword>
<keyword id="KW-0967">Endosome</keyword>
<keyword id="KW-0458">Lysosome</keyword>
<keyword id="KW-0646">Protease inhibitor</keyword>
<keyword id="KW-1185">Reference proteome</keyword>
<keyword id="KW-0964">Secreted</keyword>
<keyword id="KW-0722">Serine protease inhibitor</keyword>
<evidence type="ECO:0000250" key="1">
    <source>
        <dbReference type="UniProtKB" id="P30740"/>
    </source>
</evidence>
<evidence type="ECO:0000269" key="2">
    <source>
    </source>
</evidence>
<evidence type="ECO:0000305" key="3"/>
<evidence type="ECO:0007829" key="4">
    <source>
        <dbReference type="PDB" id="1HLE"/>
    </source>
</evidence>
<gene>
    <name type="primary">SERPINB1</name>
    <name type="synonym">ELANH2</name>
</gene>
<sequence>MEQLSTANTHFAVDLFRALNESDPTGNIFISPLSISSALAMIFLGTRGNTAAQVSKALYFDTVEDIHSRFQSLNADINKPGAPYILKLANRLYGEKTYNFLADFLASTQKMYGAELASVDFQQAPEDARKEINEWVKGQTEGKIPELLVKGMVDNMTKLVLVNAIYFKGNWQEKFMKEATRDAPFRLNKKDTKTVKMMYQKKKFPYNYIEDLKCRVLELPYQGKELSMIILLPDDIEDESTGLEKIEKQLTLEKLREWTKPENLYLAEVNVHLPRFKLEESYDLTSHLARLGVQDLFNRGKADLSGMSGARDLFVSKIIHKSFVDLNEEGTEAAAATAGTIMLAMLMPEENFNADHPFIFFIRHNPSANILFLGRFSSP</sequence>
<proteinExistence type="evidence at protein level"/>